<evidence type="ECO:0000255" key="1">
    <source>
        <dbReference type="HAMAP-Rule" id="MF_00295"/>
    </source>
</evidence>
<gene>
    <name evidence="1" type="primary">metAS</name>
    <name type="ordered locus">Shal_2884</name>
</gene>
<accession>B0TMS3</accession>
<proteinExistence type="inferred from homology"/>
<protein>
    <recommendedName>
        <fullName evidence="1">Homoserine O-succinyltransferase</fullName>
        <shortName evidence="1">HST</shortName>
        <ecNumber evidence="1">2.3.1.46</ecNumber>
    </recommendedName>
    <alternativeName>
        <fullName evidence="1">Homoserine transsuccinylase</fullName>
        <shortName evidence="1">HTS</shortName>
    </alternativeName>
</protein>
<keyword id="KW-0012">Acyltransferase</keyword>
<keyword id="KW-0028">Amino-acid biosynthesis</keyword>
<keyword id="KW-0963">Cytoplasm</keyword>
<keyword id="KW-0486">Methionine biosynthesis</keyword>
<keyword id="KW-0808">Transferase</keyword>
<feature type="chain" id="PRO_1000078937" description="Homoserine O-succinyltransferase">
    <location>
        <begin position="1"/>
        <end position="312"/>
    </location>
</feature>
<feature type="active site" description="Acyl-thioester intermediate" evidence="1">
    <location>
        <position position="142"/>
    </location>
</feature>
<feature type="active site" description="Proton acceptor" evidence="1">
    <location>
        <position position="235"/>
    </location>
</feature>
<feature type="active site" evidence="1">
    <location>
        <position position="237"/>
    </location>
</feature>
<feature type="binding site" evidence="1">
    <location>
        <position position="163"/>
    </location>
    <ligand>
        <name>substrate</name>
    </ligand>
</feature>
<feature type="binding site" evidence="1">
    <location>
        <position position="192"/>
    </location>
    <ligand>
        <name>substrate</name>
    </ligand>
</feature>
<feature type="binding site" evidence="1">
    <location>
        <position position="249"/>
    </location>
    <ligand>
        <name>substrate</name>
    </ligand>
</feature>
<feature type="site" description="Important for acyl-CoA specificity" evidence="1">
    <location>
        <position position="111"/>
    </location>
</feature>
<feature type="site" description="Important for substrate specificity" evidence="1">
    <location>
        <position position="192"/>
    </location>
</feature>
<organism>
    <name type="scientific">Shewanella halifaxensis (strain HAW-EB4)</name>
    <dbReference type="NCBI Taxonomy" id="458817"/>
    <lineage>
        <taxon>Bacteria</taxon>
        <taxon>Pseudomonadati</taxon>
        <taxon>Pseudomonadota</taxon>
        <taxon>Gammaproteobacteria</taxon>
        <taxon>Alteromonadales</taxon>
        <taxon>Shewanellaceae</taxon>
        <taxon>Shewanella</taxon>
    </lineage>
</organism>
<reference key="1">
    <citation type="submission" date="2008-01" db="EMBL/GenBank/DDBJ databases">
        <title>Complete sequence of Shewanella halifaxensis HAW-EB4.</title>
        <authorList>
            <consortium name="US DOE Joint Genome Institute"/>
            <person name="Copeland A."/>
            <person name="Lucas S."/>
            <person name="Lapidus A."/>
            <person name="Glavina del Rio T."/>
            <person name="Dalin E."/>
            <person name="Tice H."/>
            <person name="Bruce D."/>
            <person name="Goodwin L."/>
            <person name="Pitluck S."/>
            <person name="Sims D."/>
            <person name="Brettin T."/>
            <person name="Detter J.C."/>
            <person name="Han C."/>
            <person name="Kuske C.R."/>
            <person name="Schmutz J."/>
            <person name="Larimer F."/>
            <person name="Land M."/>
            <person name="Hauser L."/>
            <person name="Kyrpides N."/>
            <person name="Kim E."/>
            <person name="Zhao J.-S."/>
            <person name="Richardson P."/>
        </authorList>
    </citation>
    <scope>NUCLEOTIDE SEQUENCE [LARGE SCALE GENOMIC DNA]</scope>
    <source>
        <strain>HAW-EB4</strain>
    </source>
</reference>
<comment type="function">
    <text evidence="1">Transfers a succinyl group from succinyl-CoA to L-homoserine, forming succinyl-L-homoserine.</text>
</comment>
<comment type="catalytic activity">
    <reaction evidence="1">
        <text>L-homoserine + succinyl-CoA = O-succinyl-L-homoserine + CoA</text>
        <dbReference type="Rhea" id="RHEA:22008"/>
        <dbReference type="ChEBI" id="CHEBI:57287"/>
        <dbReference type="ChEBI" id="CHEBI:57292"/>
        <dbReference type="ChEBI" id="CHEBI:57476"/>
        <dbReference type="ChEBI" id="CHEBI:57661"/>
        <dbReference type="EC" id="2.3.1.46"/>
    </reaction>
</comment>
<comment type="pathway">
    <text evidence="1">Amino-acid biosynthesis; L-methionine biosynthesis via de novo pathway; O-succinyl-L-homoserine from L-homoserine: step 1/1.</text>
</comment>
<comment type="subcellular location">
    <subcellularLocation>
        <location evidence="1">Cytoplasm</location>
    </subcellularLocation>
</comment>
<comment type="similarity">
    <text evidence="1">Belongs to the MetA family.</text>
</comment>
<dbReference type="EC" id="2.3.1.46" evidence="1"/>
<dbReference type="EMBL" id="CP000931">
    <property type="protein sequence ID" value="ABZ77433.1"/>
    <property type="molecule type" value="Genomic_DNA"/>
</dbReference>
<dbReference type="RefSeq" id="WP_012277960.1">
    <property type="nucleotide sequence ID" value="NC_010334.1"/>
</dbReference>
<dbReference type="SMR" id="B0TMS3"/>
<dbReference type="STRING" id="458817.Shal_2884"/>
<dbReference type="KEGG" id="shl:Shal_2884"/>
<dbReference type="eggNOG" id="COG1897">
    <property type="taxonomic scope" value="Bacteria"/>
</dbReference>
<dbReference type="HOGENOM" id="CLU_057851_0_1_6"/>
<dbReference type="OrthoDB" id="9772423at2"/>
<dbReference type="UniPathway" id="UPA00051">
    <property type="reaction ID" value="UER00075"/>
</dbReference>
<dbReference type="Proteomes" id="UP000001317">
    <property type="component" value="Chromosome"/>
</dbReference>
<dbReference type="GO" id="GO:0005737">
    <property type="term" value="C:cytoplasm"/>
    <property type="evidence" value="ECO:0007669"/>
    <property type="project" value="UniProtKB-SubCell"/>
</dbReference>
<dbReference type="GO" id="GO:0004414">
    <property type="term" value="F:homoserine O-acetyltransferase activity"/>
    <property type="evidence" value="ECO:0007669"/>
    <property type="project" value="UniProtKB-UniRule"/>
</dbReference>
<dbReference type="GO" id="GO:0008899">
    <property type="term" value="F:homoserine O-succinyltransferase activity"/>
    <property type="evidence" value="ECO:0007669"/>
    <property type="project" value="UniProtKB-EC"/>
</dbReference>
<dbReference type="GO" id="GO:0019281">
    <property type="term" value="P:L-methionine biosynthetic process from homoserine via O-succinyl-L-homoserine and cystathionine"/>
    <property type="evidence" value="ECO:0007669"/>
    <property type="project" value="InterPro"/>
</dbReference>
<dbReference type="CDD" id="cd03131">
    <property type="entry name" value="GATase1_HTS"/>
    <property type="match status" value="1"/>
</dbReference>
<dbReference type="FunFam" id="3.40.50.880:FF:000004">
    <property type="entry name" value="Homoserine O-succinyltransferase"/>
    <property type="match status" value="1"/>
</dbReference>
<dbReference type="Gene3D" id="3.40.50.880">
    <property type="match status" value="1"/>
</dbReference>
<dbReference type="HAMAP" id="MF_00295">
    <property type="entry name" value="MetA_acyltransf"/>
    <property type="match status" value="1"/>
</dbReference>
<dbReference type="InterPro" id="IPR029062">
    <property type="entry name" value="Class_I_gatase-like"/>
</dbReference>
<dbReference type="InterPro" id="IPR005697">
    <property type="entry name" value="HST_MetA"/>
</dbReference>
<dbReference type="InterPro" id="IPR033752">
    <property type="entry name" value="MetA_family"/>
</dbReference>
<dbReference type="NCBIfam" id="TIGR01001">
    <property type="entry name" value="metA"/>
    <property type="match status" value="1"/>
</dbReference>
<dbReference type="PANTHER" id="PTHR20919">
    <property type="entry name" value="HOMOSERINE O-SUCCINYLTRANSFERASE"/>
    <property type="match status" value="1"/>
</dbReference>
<dbReference type="PANTHER" id="PTHR20919:SF0">
    <property type="entry name" value="HOMOSERINE O-SUCCINYLTRANSFERASE"/>
    <property type="match status" value="1"/>
</dbReference>
<dbReference type="Pfam" id="PF04204">
    <property type="entry name" value="HTS"/>
    <property type="match status" value="1"/>
</dbReference>
<dbReference type="PIRSF" id="PIRSF000450">
    <property type="entry name" value="H_ser_succinyltr"/>
    <property type="match status" value="1"/>
</dbReference>
<dbReference type="SUPFAM" id="SSF52317">
    <property type="entry name" value="Class I glutamine amidotransferase-like"/>
    <property type="match status" value="1"/>
</dbReference>
<name>METAS_SHEHH</name>
<sequence>MPVKIPDDLPAAEILESENIFVMSETRAANQDIRPMKVLILNLMPNKIETETQLLRLLGNTPLQVDVDLLRIHDKASKHTSIDHMNNFYRDFEQVRQKNYDGLIITGAPLGQIEFEEVLYWDHIREIIDWSQQHVTSVLFLCWAAHAALYHLFGLNRSLLTTKRSGVFTHKRTSEHYPLLRGFDDEFFAPHSRFAEMDIDKLKAHPELQVLTESETAGAYMVLCKNNRNLFVMGHPEYQKSTLKDEYYRDLEQGLAPEVPQNYFTNNDPLQAPIARWHSHGSLLVSNWLNYYVYQLTPYNLDDMTGITPWGT</sequence>